<reference key="1">
    <citation type="journal article" date="2011" name="J. Bacteriol.">
        <title>Complete genome sequence and updated annotation of Desulfovibrio alaskensis G20.</title>
        <authorList>
            <person name="Hauser L.J."/>
            <person name="Land M.L."/>
            <person name="Brown S.D."/>
            <person name="Larimer F."/>
            <person name="Keller K.L."/>
            <person name="Rapp-Giles B.J."/>
            <person name="Price M.N."/>
            <person name="Lin M."/>
            <person name="Bruce D.C."/>
            <person name="Detter J.C."/>
            <person name="Tapia R."/>
            <person name="Han C.S."/>
            <person name="Goodwin L.A."/>
            <person name="Cheng J.F."/>
            <person name="Pitluck S."/>
            <person name="Copeland A."/>
            <person name="Lucas S."/>
            <person name="Nolan M."/>
            <person name="Lapidus A.L."/>
            <person name="Palumbo A.V."/>
            <person name="Wall J.D."/>
        </authorList>
    </citation>
    <scope>NUCLEOTIDE SEQUENCE [LARGE SCALE GENOMIC DNA]</scope>
    <source>
        <strain>ATCC BAA-1058 / DSM 17464 / G20</strain>
    </source>
</reference>
<dbReference type="EC" id="6.1.1.20" evidence="1"/>
<dbReference type="EMBL" id="CP000112">
    <property type="protein sequence ID" value="ABB39430.1"/>
    <property type="molecule type" value="Genomic_DNA"/>
</dbReference>
<dbReference type="RefSeq" id="WP_011368466.1">
    <property type="nucleotide sequence ID" value="NC_007519.1"/>
</dbReference>
<dbReference type="SMR" id="Q30Y16"/>
<dbReference type="STRING" id="207559.Dde_2634"/>
<dbReference type="KEGG" id="dde:Dde_2634"/>
<dbReference type="eggNOG" id="COG0072">
    <property type="taxonomic scope" value="Bacteria"/>
</dbReference>
<dbReference type="HOGENOM" id="CLU_016891_0_0_7"/>
<dbReference type="Proteomes" id="UP000002710">
    <property type="component" value="Chromosome"/>
</dbReference>
<dbReference type="GO" id="GO:0009328">
    <property type="term" value="C:phenylalanine-tRNA ligase complex"/>
    <property type="evidence" value="ECO:0007669"/>
    <property type="project" value="TreeGrafter"/>
</dbReference>
<dbReference type="GO" id="GO:0005524">
    <property type="term" value="F:ATP binding"/>
    <property type="evidence" value="ECO:0007669"/>
    <property type="project" value="UniProtKB-UniRule"/>
</dbReference>
<dbReference type="GO" id="GO:0000287">
    <property type="term" value="F:magnesium ion binding"/>
    <property type="evidence" value="ECO:0007669"/>
    <property type="project" value="UniProtKB-UniRule"/>
</dbReference>
<dbReference type="GO" id="GO:0004826">
    <property type="term" value="F:phenylalanine-tRNA ligase activity"/>
    <property type="evidence" value="ECO:0007669"/>
    <property type="project" value="UniProtKB-UniRule"/>
</dbReference>
<dbReference type="GO" id="GO:0000049">
    <property type="term" value="F:tRNA binding"/>
    <property type="evidence" value="ECO:0007669"/>
    <property type="project" value="UniProtKB-KW"/>
</dbReference>
<dbReference type="GO" id="GO:0006432">
    <property type="term" value="P:phenylalanyl-tRNA aminoacylation"/>
    <property type="evidence" value="ECO:0007669"/>
    <property type="project" value="UniProtKB-UniRule"/>
</dbReference>
<dbReference type="CDD" id="cd00769">
    <property type="entry name" value="PheRS_beta_core"/>
    <property type="match status" value="1"/>
</dbReference>
<dbReference type="CDD" id="cd02796">
    <property type="entry name" value="tRNA_bind_bactPheRS"/>
    <property type="match status" value="1"/>
</dbReference>
<dbReference type="FunFam" id="2.40.50.140:FF:000045">
    <property type="entry name" value="Phenylalanine--tRNA ligase beta subunit"/>
    <property type="match status" value="1"/>
</dbReference>
<dbReference type="FunFam" id="3.50.40.10:FF:000001">
    <property type="entry name" value="Phenylalanine--tRNA ligase beta subunit"/>
    <property type="match status" value="1"/>
</dbReference>
<dbReference type="Gene3D" id="3.30.56.10">
    <property type="match status" value="2"/>
</dbReference>
<dbReference type="Gene3D" id="3.30.930.10">
    <property type="entry name" value="Bira Bifunctional Protein, Domain 2"/>
    <property type="match status" value="1"/>
</dbReference>
<dbReference type="Gene3D" id="3.30.70.380">
    <property type="entry name" value="Ferrodoxin-fold anticodon-binding domain"/>
    <property type="match status" value="1"/>
</dbReference>
<dbReference type="Gene3D" id="2.40.50.140">
    <property type="entry name" value="Nucleic acid-binding proteins"/>
    <property type="match status" value="1"/>
</dbReference>
<dbReference type="Gene3D" id="3.50.40.10">
    <property type="entry name" value="Phenylalanyl-trna Synthetase, Chain B, domain 3"/>
    <property type="match status" value="1"/>
</dbReference>
<dbReference type="HAMAP" id="MF_00283">
    <property type="entry name" value="Phe_tRNA_synth_beta1"/>
    <property type="match status" value="1"/>
</dbReference>
<dbReference type="InterPro" id="IPR045864">
    <property type="entry name" value="aa-tRNA-synth_II/BPL/LPL"/>
</dbReference>
<dbReference type="InterPro" id="IPR005146">
    <property type="entry name" value="B3/B4_tRNA-bd"/>
</dbReference>
<dbReference type="InterPro" id="IPR009061">
    <property type="entry name" value="DNA-bd_dom_put_sf"/>
</dbReference>
<dbReference type="InterPro" id="IPR005121">
    <property type="entry name" value="Fdx_antiC-bd"/>
</dbReference>
<dbReference type="InterPro" id="IPR036690">
    <property type="entry name" value="Fdx_antiC-bd_sf"/>
</dbReference>
<dbReference type="InterPro" id="IPR012340">
    <property type="entry name" value="NA-bd_OB-fold"/>
</dbReference>
<dbReference type="InterPro" id="IPR045060">
    <property type="entry name" value="Phe-tRNA-ligase_IIc_bsu"/>
</dbReference>
<dbReference type="InterPro" id="IPR004532">
    <property type="entry name" value="Phe-tRNA-ligase_IIc_bsu_bact"/>
</dbReference>
<dbReference type="InterPro" id="IPR020825">
    <property type="entry name" value="Phe-tRNA_synthase-like_B3/B4"/>
</dbReference>
<dbReference type="InterPro" id="IPR041616">
    <property type="entry name" value="PheRS_beta_core"/>
</dbReference>
<dbReference type="InterPro" id="IPR002547">
    <property type="entry name" value="tRNA-bd_dom"/>
</dbReference>
<dbReference type="InterPro" id="IPR033714">
    <property type="entry name" value="tRNA_bind_bactPheRS"/>
</dbReference>
<dbReference type="InterPro" id="IPR005147">
    <property type="entry name" value="tRNA_synthase_B5-dom"/>
</dbReference>
<dbReference type="NCBIfam" id="TIGR00472">
    <property type="entry name" value="pheT_bact"/>
    <property type="match status" value="1"/>
</dbReference>
<dbReference type="NCBIfam" id="NF045760">
    <property type="entry name" value="YtpR"/>
    <property type="match status" value="1"/>
</dbReference>
<dbReference type="PANTHER" id="PTHR10947:SF0">
    <property type="entry name" value="PHENYLALANINE--TRNA LIGASE BETA SUBUNIT"/>
    <property type="match status" value="1"/>
</dbReference>
<dbReference type="PANTHER" id="PTHR10947">
    <property type="entry name" value="PHENYLALANYL-TRNA SYNTHETASE BETA CHAIN AND LEUCINE-RICH REPEAT-CONTAINING PROTEIN 47"/>
    <property type="match status" value="1"/>
</dbReference>
<dbReference type="Pfam" id="PF03483">
    <property type="entry name" value="B3_4"/>
    <property type="match status" value="1"/>
</dbReference>
<dbReference type="Pfam" id="PF03484">
    <property type="entry name" value="B5"/>
    <property type="match status" value="1"/>
</dbReference>
<dbReference type="Pfam" id="PF03147">
    <property type="entry name" value="FDX-ACB"/>
    <property type="match status" value="1"/>
</dbReference>
<dbReference type="Pfam" id="PF01588">
    <property type="entry name" value="tRNA_bind"/>
    <property type="match status" value="1"/>
</dbReference>
<dbReference type="Pfam" id="PF17759">
    <property type="entry name" value="tRNA_synthFbeta"/>
    <property type="match status" value="1"/>
</dbReference>
<dbReference type="SMART" id="SM00873">
    <property type="entry name" value="B3_4"/>
    <property type="match status" value="1"/>
</dbReference>
<dbReference type="SMART" id="SM00874">
    <property type="entry name" value="B5"/>
    <property type="match status" value="1"/>
</dbReference>
<dbReference type="SMART" id="SM00896">
    <property type="entry name" value="FDX-ACB"/>
    <property type="match status" value="1"/>
</dbReference>
<dbReference type="SUPFAM" id="SSF54991">
    <property type="entry name" value="Anticodon-binding domain of PheRS"/>
    <property type="match status" value="1"/>
</dbReference>
<dbReference type="SUPFAM" id="SSF55681">
    <property type="entry name" value="Class II aaRS and biotin synthetases"/>
    <property type="match status" value="1"/>
</dbReference>
<dbReference type="SUPFAM" id="SSF50249">
    <property type="entry name" value="Nucleic acid-binding proteins"/>
    <property type="match status" value="1"/>
</dbReference>
<dbReference type="SUPFAM" id="SSF56037">
    <property type="entry name" value="PheT/TilS domain"/>
    <property type="match status" value="1"/>
</dbReference>
<dbReference type="SUPFAM" id="SSF46955">
    <property type="entry name" value="Putative DNA-binding domain"/>
    <property type="match status" value="1"/>
</dbReference>
<dbReference type="PROSITE" id="PS51483">
    <property type="entry name" value="B5"/>
    <property type="match status" value="1"/>
</dbReference>
<dbReference type="PROSITE" id="PS51447">
    <property type="entry name" value="FDX_ACB"/>
    <property type="match status" value="1"/>
</dbReference>
<dbReference type="PROSITE" id="PS50886">
    <property type="entry name" value="TRBD"/>
    <property type="match status" value="1"/>
</dbReference>
<gene>
    <name evidence="1" type="primary">pheT</name>
    <name type="ordered locus">Dde_2634</name>
</gene>
<proteinExistence type="inferred from homology"/>
<name>SYFB_OLEA2</name>
<comment type="catalytic activity">
    <reaction evidence="1">
        <text>tRNA(Phe) + L-phenylalanine + ATP = L-phenylalanyl-tRNA(Phe) + AMP + diphosphate + H(+)</text>
        <dbReference type="Rhea" id="RHEA:19413"/>
        <dbReference type="Rhea" id="RHEA-COMP:9668"/>
        <dbReference type="Rhea" id="RHEA-COMP:9699"/>
        <dbReference type="ChEBI" id="CHEBI:15378"/>
        <dbReference type="ChEBI" id="CHEBI:30616"/>
        <dbReference type="ChEBI" id="CHEBI:33019"/>
        <dbReference type="ChEBI" id="CHEBI:58095"/>
        <dbReference type="ChEBI" id="CHEBI:78442"/>
        <dbReference type="ChEBI" id="CHEBI:78531"/>
        <dbReference type="ChEBI" id="CHEBI:456215"/>
        <dbReference type="EC" id="6.1.1.20"/>
    </reaction>
</comment>
<comment type="cofactor">
    <cofactor evidence="1">
        <name>Mg(2+)</name>
        <dbReference type="ChEBI" id="CHEBI:18420"/>
    </cofactor>
    <text evidence="1">Binds 2 magnesium ions per tetramer.</text>
</comment>
<comment type="subunit">
    <text evidence="1">Tetramer of two alpha and two beta subunits.</text>
</comment>
<comment type="subcellular location">
    <subcellularLocation>
        <location evidence="1">Cytoplasm</location>
    </subcellularLocation>
</comment>
<comment type="similarity">
    <text evidence="1">Belongs to the phenylalanyl-tRNA synthetase beta subunit family. Type 1 subfamily.</text>
</comment>
<organism>
    <name type="scientific">Oleidesulfovibrio alaskensis (strain ATCC BAA-1058 / DSM 17464 / G20)</name>
    <name type="common">Desulfovibrio alaskensis</name>
    <dbReference type="NCBI Taxonomy" id="207559"/>
    <lineage>
        <taxon>Bacteria</taxon>
        <taxon>Pseudomonadati</taxon>
        <taxon>Thermodesulfobacteriota</taxon>
        <taxon>Desulfovibrionia</taxon>
        <taxon>Desulfovibrionales</taxon>
        <taxon>Desulfovibrionaceae</taxon>
        <taxon>Oleidesulfovibrio</taxon>
    </lineage>
</organism>
<accession>Q30Y16</accession>
<sequence>MLLSLNWLREFVPYTGTAQELGDRLTMLGLELEEIIRPFDAIADIVVGHVLECGRHPEADKLSVCRVDVGTEVLDIVCGAPNVAAGQKVPVAKVGVTMPSGLKIKKAKLRGQPSCGMICSESELELSDESDGIMVLPQDSVPGVRLVDLLQLDDTVLDISITPNRADCLSVLGLAREVALAFDLPLTMPQLELREQGEDAGSDVTIAIADGAQCPVYQGRIIEGISTCPSPLWMRHRLKSVGVRPISAIVDVTNYILMELGQPLHAFDLDLLEGARIVVETAAEGERFTTLDGQERVLKASDLLIRDGAKAVALAGVMGGANTEINDASRRVFLECAVFKPATIRRTARRLGLSSESSYRFERGVDQVLSTFAMNRAAQLMCELSGGVLRPGVCRAEPAPWQAAQLRFRPARAAALLGISLDDGFCRETLQKLGCTLSGADTPEWTVTAPSHRHDLEREADLIEEVGRVYGMDNIPPVLPKVSKPLEQGRTDSEYEFWARIKAWGRGLGLNEAVNYSFVGHKDLDFLGLPAGNRISIMNPLTSEQDVLRTELAPGLLNTLRHNLAQGSTGLQVFELAHIFEADQSSDTTARESGRLGLLVYGQRYQDGWPRREEDAGYEDLKGIVEHLLRVLNLGPAAFTLRKDHSWLLPCVEIRVGSVCAGVAGRVKPDIADAYHARKDVWMAEIDLDALRTLCRDVAVQFSALPVFPPVKRDITVMAPASVPVSAVTDHVRGMSLKLFSDIVLVDVFEPETPEGGTPERNLTFRLTFRHAERTLKDKEVDKERDKVAESLTEALGVRI</sequence>
<keyword id="KW-0030">Aminoacyl-tRNA synthetase</keyword>
<keyword id="KW-0067">ATP-binding</keyword>
<keyword id="KW-0963">Cytoplasm</keyword>
<keyword id="KW-0436">Ligase</keyword>
<keyword id="KW-0460">Magnesium</keyword>
<keyword id="KW-0479">Metal-binding</keyword>
<keyword id="KW-0547">Nucleotide-binding</keyword>
<keyword id="KW-0648">Protein biosynthesis</keyword>
<keyword id="KW-1185">Reference proteome</keyword>
<keyword id="KW-0694">RNA-binding</keyword>
<keyword id="KW-0820">tRNA-binding</keyword>
<protein>
    <recommendedName>
        <fullName evidence="1">Phenylalanine--tRNA ligase beta subunit</fullName>
        <ecNumber evidence="1">6.1.1.20</ecNumber>
    </recommendedName>
    <alternativeName>
        <fullName evidence="1">Phenylalanyl-tRNA synthetase beta subunit</fullName>
        <shortName evidence="1">PheRS</shortName>
    </alternativeName>
</protein>
<feature type="chain" id="PRO_0000232060" description="Phenylalanine--tRNA ligase beta subunit">
    <location>
        <begin position="1"/>
        <end position="800"/>
    </location>
</feature>
<feature type="domain" description="tRNA-binding" evidence="1">
    <location>
        <begin position="39"/>
        <end position="147"/>
    </location>
</feature>
<feature type="domain" description="B5" evidence="1">
    <location>
        <begin position="401"/>
        <end position="477"/>
    </location>
</feature>
<feature type="domain" description="FDX-ACB" evidence="1">
    <location>
        <begin position="706"/>
        <end position="800"/>
    </location>
</feature>
<feature type="binding site" evidence="1">
    <location>
        <position position="455"/>
    </location>
    <ligand>
        <name>Mg(2+)</name>
        <dbReference type="ChEBI" id="CHEBI:18420"/>
        <note>shared with alpha subunit</note>
    </ligand>
</feature>
<feature type="binding site" evidence="1">
    <location>
        <position position="461"/>
    </location>
    <ligand>
        <name>Mg(2+)</name>
        <dbReference type="ChEBI" id="CHEBI:18420"/>
        <note>shared with alpha subunit</note>
    </ligand>
</feature>
<feature type="binding site" evidence="1">
    <location>
        <position position="464"/>
    </location>
    <ligand>
        <name>Mg(2+)</name>
        <dbReference type="ChEBI" id="CHEBI:18420"/>
        <note>shared with alpha subunit</note>
    </ligand>
</feature>
<feature type="binding site" evidence="1">
    <location>
        <position position="465"/>
    </location>
    <ligand>
        <name>Mg(2+)</name>
        <dbReference type="ChEBI" id="CHEBI:18420"/>
        <note>shared with alpha subunit</note>
    </ligand>
</feature>
<evidence type="ECO:0000255" key="1">
    <source>
        <dbReference type="HAMAP-Rule" id="MF_00283"/>
    </source>
</evidence>